<organism>
    <name type="scientific">Shewanella piezotolerans (strain WP3 / JCM 13877)</name>
    <dbReference type="NCBI Taxonomy" id="225849"/>
    <lineage>
        <taxon>Bacteria</taxon>
        <taxon>Pseudomonadati</taxon>
        <taxon>Pseudomonadota</taxon>
        <taxon>Gammaproteobacteria</taxon>
        <taxon>Alteromonadales</taxon>
        <taxon>Shewanellaceae</taxon>
        <taxon>Shewanella</taxon>
    </lineage>
</organism>
<reference key="1">
    <citation type="journal article" date="2008" name="PLoS ONE">
        <title>Environmental adaptation: genomic analysis of the piezotolerant and psychrotolerant deep-sea iron reducing bacterium Shewanella piezotolerans WP3.</title>
        <authorList>
            <person name="Wang F."/>
            <person name="Wang J."/>
            <person name="Jian H."/>
            <person name="Zhang B."/>
            <person name="Li S."/>
            <person name="Wang F."/>
            <person name="Zeng X."/>
            <person name="Gao L."/>
            <person name="Bartlett D.H."/>
            <person name="Yu J."/>
            <person name="Hu S."/>
            <person name="Xiao X."/>
        </authorList>
    </citation>
    <scope>NUCLEOTIDE SEQUENCE [LARGE SCALE GENOMIC DNA]</scope>
    <source>
        <strain>WP3 / JCM 13877</strain>
    </source>
</reference>
<protein>
    <recommendedName>
        <fullName evidence="1">Transcription antitermination protein NusB</fullName>
    </recommendedName>
    <alternativeName>
        <fullName evidence="1">Antitermination factor NusB</fullName>
    </alternativeName>
</protein>
<name>NUSB_SHEPW</name>
<feature type="chain" id="PRO_1000117056" description="Transcription antitermination protein NusB">
    <location>
        <begin position="1"/>
        <end position="135"/>
    </location>
</feature>
<accession>B8CJN3</accession>
<keyword id="KW-0694">RNA-binding</keyword>
<keyword id="KW-0804">Transcription</keyword>
<keyword id="KW-0889">Transcription antitermination</keyword>
<keyword id="KW-0805">Transcription regulation</keyword>
<comment type="function">
    <text evidence="1">Involved in transcription antitermination. Required for transcription of ribosomal RNA (rRNA) genes. Binds specifically to the boxA antiterminator sequence of the ribosomal RNA (rrn) operons.</text>
</comment>
<comment type="similarity">
    <text evidence="1">Belongs to the NusB family.</text>
</comment>
<dbReference type="EMBL" id="CP000472">
    <property type="protein sequence ID" value="ACJ28130.1"/>
    <property type="molecule type" value="Genomic_DNA"/>
</dbReference>
<dbReference type="RefSeq" id="WP_020911508.1">
    <property type="nucleotide sequence ID" value="NC_011566.1"/>
</dbReference>
<dbReference type="SMR" id="B8CJN3"/>
<dbReference type="STRING" id="225849.swp_1343"/>
<dbReference type="KEGG" id="swp:swp_1343"/>
<dbReference type="eggNOG" id="COG0781">
    <property type="taxonomic scope" value="Bacteria"/>
</dbReference>
<dbReference type="HOGENOM" id="CLU_087843_4_1_6"/>
<dbReference type="OrthoDB" id="9789556at2"/>
<dbReference type="Proteomes" id="UP000000753">
    <property type="component" value="Chromosome"/>
</dbReference>
<dbReference type="GO" id="GO:0005829">
    <property type="term" value="C:cytosol"/>
    <property type="evidence" value="ECO:0007669"/>
    <property type="project" value="TreeGrafter"/>
</dbReference>
<dbReference type="GO" id="GO:0003723">
    <property type="term" value="F:RNA binding"/>
    <property type="evidence" value="ECO:0007669"/>
    <property type="project" value="UniProtKB-UniRule"/>
</dbReference>
<dbReference type="GO" id="GO:0006353">
    <property type="term" value="P:DNA-templated transcription termination"/>
    <property type="evidence" value="ECO:0007669"/>
    <property type="project" value="UniProtKB-UniRule"/>
</dbReference>
<dbReference type="GO" id="GO:0031564">
    <property type="term" value="P:transcription antitermination"/>
    <property type="evidence" value="ECO:0007669"/>
    <property type="project" value="UniProtKB-KW"/>
</dbReference>
<dbReference type="CDD" id="cd00619">
    <property type="entry name" value="Terminator_NusB"/>
    <property type="match status" value="1"/>
</dbReference>
<dbReference type="FunFam" id="1.10.940.10:FF:000001">
    <property type="entry name" value="Transcription antitermination factor NusB"/>
    <property type="match status" value="1"/>
</dbReference>
<dbReference type="Gene3D" id="1.10.940.10">
    <property type="entry name" value="NusB-like"/>
    <property type="match status" value="1"/>
</dbReference>
<dbReference type="HAMAP" id="MF_00073">
    <property type="entry name" value="NusB"/>
    <property type="match status" value="1"/>
</dbReference>
<dbReference type="InterPro" id="IPR035926">
    <property type="entry name" value="NusB-like_sf"/>
</dbReference>
<dbReference type="InterPro" id="IPR011605">
    <property type="entry name" value="NusB_fam"/>
</dbReference>
<dbReference type="InterPro" id="IPR006027">
    <property type="entry name" value="NusB_RsmB_TIM44"/>
</dbReference>
<dbReference type="NCBIfam" id="TIGR01951">
    <property type="entry name" value="nusB"/>
    <property type="match status" value="1"/>
</dbReference>
<dbReference type="PANTHER" id="PTHR11078:SF3">
    <property type="entry name" value="ANTITERMINATION NUSB DOMAIN-CONTAINING PROTEIN"/>
    <property type="match status" value="1"/>
</dbReference>
<dbReference type="PANTHER" id="PTHR11078">
    <property type="entry name" value="N UTILIZATION SUBSTANCE PROTEIN B-RELATED"/>
    <property type="match status" value="1"/>
</dbReference>
<dbReference type="Pfam" id="PF01029">
    <property type="entry name" value="NusB"/>
    <property type="match status" value="1"/>
</dbReference>
<dbReference type="SUPFAM" id="SSF48013">
    <property type="entry name" value="NusB-like"/>
    <property type="match status" value="1"/>
</dbReference>
<proteinExistence type="inferred from homology"/>
<gene>
    <name evidence="1" type="primary">nusB</name>
    <name type="ordered locus">swp_1343</name>
</gene>
<sequence>MKPSERRKARRLAVQAIYSWQLSGNNIADVEHEFLTEQNVDGVDIAYFRELLGGVATKKSQLDELITPFLVRPMDEVDPVEKAIVRLAAYELTFRKDVPYKVAINEAIELAKAFGAEDGHKFVNGILDKLVARTK</sequence>
<evidence type="ECO:0000255" key="1">
    <source>
        <dbReference type="HAMAP-Rule" id="MF_00073"/>
    </source>
</evidence>